<feature type="chain" id="PRO_1000083590" description="Cobalt-precorrin-5B C(1)-methyltransferase">
    <location>
        <begin position="1"/>
        <end position="394"/>
    </location>
</feature>
<reference key="1">
    <citation type="submission" date="2007-06" db="EMBL/GenBank/DDBJ databases">
        <title>Complete sequence of Clostridium beijerinckii NCIMB 8052.</title>
        <authorList>
            <consortium name="US DOE Joint Genome Institute"/>
            <person name="Copeland A."/>
            <person name="Lucas S."/>
            <person name="Lapidus A."/>
            <person name="Barry K."/>
            <person name="Detter J.C."/>
            <person name="Glavina del Rio T."/>
            <person name="Hammon N."/>
            <person name="Israni S."/>
            <person name="Dalin E."/>
            <person name="Tice H."/>
            <person name="Pitluck S."/>
            <person name="Sims D."/>
            <person name="Brettin T."/>
            <person name="Bruce D."/>
            <person name="Tapia R."/>
            <person name="Brainard J."/>
            <person name="Schmutz J."/>
            <person name="Larimer F."/>
            <person name="Land M."/>
            <person name="Hauser L."/>
            <person name="Kyrpides N."/>
            <person name="Mikhailova N."/>
            <person name="Bennet G."/>
            <person name="Cann I."/>
            <person name="Chen J.-S."/>
            <person name="Contreras A.L."/>
            <person name="Jones D."/>
            <person name="Kashket E."/>
            <person name="Mitchell W."/>
            <person name="Stoddard S."/>
            <person name="Schwarz W."/>
            <person name="Qureshi N."/>
            <person name="Young M."/>
            <person name="Shi Z."/>
            <person name="Ezeji T."/>
            <person name="White B."/>
            <person name="Blaschek H."/>
            <person name="Richardson P."/>
        </authorList>
    </citation>
    <scope>NUCLEOTIDE SEQUENCE [LARGE SCALE GENOMIC DNA]</scope>
    <source>
        <strain>ATCC 51743 / NCIMB 8052</strain>
    </source>
</reference>
<keyword id="KW-0169">Cobalamin biosynthesis</keyword>
<keyword id="KW-0489">Methyltransferase</keyword>
<keyword id="KW-0949">S-adenosyl-L-methionine</keyword>
<keyword id="KW-0808">Transferase</keyword>
<evidence type="ECO:0000255" key="1">
    <source>
        <dbReference type="HAMAP-Rule" id="MF_00787"/>
    </source>
</evidence>
<protein>
    <recommendedName>
        <fullName evidence="1">Cobalt-precorrin-5B C(1)-methyltransferase</fullName>
        <ecNumber evidence="1">2.1.1.195</ecNumber>
    </recommendedName>
    <alternativeName>
        <fullName evidence="1">Cobalt-precorrin-6A synthase</fullName>
    </alternativeName>
</protein>
<proteinExistence type="inferred from homology"/>
<gene>
    <name evidence="1" type="primary">cbiD</name>
    <name type="ordered locus">Cbei_2312</name>
</gene>
<organism>
    <name type="scientific">Clostridium beijerinckii (strain ATCC 51743 / NCIMB 8052)</name>
    <name type="common">Clostridium acetobutylicum</name>
    <dbReference type="NCBI Taxonomy" id="290402"/>
    <lineage>
        <taxon>Bacteria</taxon>
        <taxon>Bacillati</taxon>
        <taxon>Bacillota</taxon>
        <taxon>Clostridia</taxon>
        <taxon>Eubacteriales</taxon>
        <taxon>Clostridiaceae</taxon>
        <taxon>Clostridium</taxon>
    </lineage>
</organism>
<sequence>MFEMYVDVDGKRLRCGYTTGSCSAGAAKAATIILFNKEKNLNEIEIATPKGIDVTMPIELIEKFDDYVECTILKDGGDDPDNTHGIEIKAMVKKIKPIDNKIFQDEDLQKFDSVLVEDSRAEKEDELERVVLKGGTGVGIVTREGLFIPKGQAAINPVPRKMIKEEVLKVLPPGERVEVIISVPQGEKVAKKTFNPRLGIVGGISILGTTGIVYPMSEDALKASIKIEITQKAINNERLVLTFGNLGDNYCKELGFKEEEVVTCSNFIGFALETCVSCKVKSIIIVGHIGKMSKIAYGCFNTHSKVNGVRLEVIALELALLGYDMSLVKRVLEEKTCEGAVKMLGDGYDKLYENIGNKIVQKIKEHVYGELEVDAVMYYGASNPILLWKSIKDN</sequence>
<name>CBID_CLOB8</name>
<comment type="function">
    <text evidence="1">Catalyzes the methylation of C-1 in cobalt-precorrin-5B to form cobalt-precorrin-6A.</text>
</comment>
<comment type="catalytic activity">
    <reaction evidence="1">
        <text>Co-precorrin-5B + S-adenosyl-L-methionine = Co-precorrin-6A + S-adenosyl-L-homocysteine</text>
        <dbReference type="Rhea" id="RHEA:26285"/>
        <dbReference type="ChEBI" id="CHEBI:57856"/>
        <dbReference type="ChEBI" id="CHEBI:59789"/>
        <dbReference type="ChEBI" id="CHEBI:60063"/>
        <dbReference type="ChEBI" id="CHEBI:60064"/>
        <dbReference type="EC" id="2.1.1.195"/>
    </reaction>
</comment>
<comment type="pathway">
    <text evidence="1">Cofactor biosynthesis; adenosylcobalamin biosynthesis; cob(II)yrinate a,c-diamide from sirohydrochlorin (anaerobic route): step 6/10.</text>
</comment>
<comment type="similarity">
    <text evidence="1">Belongs to the CbiD family.</text>
</comment>
<accession>A6LVU2</accession>
<dbReference type="EC" id="2.1.1.195" evidence="1"/>
<dbReference type="EMBL" id="CP000721">
    <property type="protein sequence ID" value="ABR34472.1"/>
    <property type="molecule type" value="Genomic_DNA"/>
</dbReference>
<dbReference type="RefSeq" id="WP_012058528.1">
    <property type="nucleotide sequence ID" value="NC_009617.1"/>
</dbReference>
<dbReference type="SMR" id="A6LVU2"/>
<dbReference type="KEGG" id="cbe:Cbei_2312"/>
<dbReference type="eggNOG" id="COG1903">
    <property type="taxonomic scope" value="Bacteria"/>
</dbReference>
<dbReference type="HOGENOM" id="CLU_041273_1_0_9"/>
<dbReference type="UniPathway" id="UPA00148">
    <property type="reaction ID" value="UER00227"/>
</dbReference>
<dbReference type="Proteomes" id="UP000000565">
    <property type="component" value="Chromosome"/>
</dbReference>
<dbReference type="GO" id="GO:0043780">
    <property type="term" value="F:cobalt-precorrin-5B C1-methyltransferase activity"/>
    <property type="evidence" value="ECO:0007669"/>
    <property type="project" value="RHEA"/>
</dbReference>
<dbReference type="GO" id="GO:0019251">
    <property type="term" value="P:anaerobic cobalamin biosynthetic process"/>
    <property type="evidence" value="ECO:0007669"/>
    <property type="project" value="UniProtKB-UniRule"/>
</dbReference>
<dbReference type="GO" id="GO:0032259">
    <property type="term" value="P:methylation"/>
    <property type="evidence" value="ECO:0007669"/>
    <property type="project" value="UniProtKB-KW"/>
</dbReference>
<dbReference type="Gene3D" id="3.30.2110.10">
    <property type="entry name" value="CbiD-like"/>
    <property type="match status" value="1"/>
</dbReference>
<dbReference type="HAMAP" id="MF_00787">
    <property type="entry name" value="CbiD"/>
    <property type="match status" value="1"/>
</dbReference>
<dbReference type="InterPro" id="IPR002748">
    <property type="entry name" value="CbiD"/>
</dbReference>
<dbReference type="InterPro" id="IPR036074">
    <property type="entry name" value="CbiD_sf"/>
</dbReference>
<dbReference type="NCBIfam" id="TIGR00312">
    <property type="entry name" value="cbiD"/>
    <property type="match status" value="1"/>
</dbReference>
<dbReference type="PANTHER" id="PTHR35863">
    <property type="entry name" value="COBALT-PRECORRIN-5B C(1)-METHYLTRANSFERASE"/>
    <property type="match status" value="1"/>
</dbReference>
<dbReference type="PANTHER" id="PTHR35863:SF1">
    <property type="entry name" value="COBALT-PRECORRIN-5B C(1)-METHYLTRANSFERASE"/>
    <property type="match status" value="1"/>
</dbReference>
<dbReference type="Pfam" id="PF01888">
    <property type="entry name" value="CbiD"/>
    <property type="match status" value="1"/>
</dbReference>
<dbReference type="PIRSF" id="PIRSF026782">
    <property type="entry name" value="CbiD"/>
    <property type="match status" value="1"/>
</dbReference>
<dbReference type="SUPFAM" id="SSF111342">
    <property type="entry name" value="CbiD-like"/>
    <property type="match status" value="1"/>
</dbReference>